<sequence length="435" mass="48150">MSQCFAVKGIGGADQATLGSAEILVKYAQLADKRARVYVLVSTWLVVWGIWHVYFVEAVFPNAILWLHYYAASYEFGFVRRGLGGELIRMLTGDHFFAGAYTVLWTSITVWLIALAVVVWLILSTGNRSERRIMLALLVPVLPFAFSYAIYNPHPELFGMTALVAFSIFLTRAHTSRTRVILSTLYGLTMAVLALIHEAIPLEFALGAVLAIIVLSKNATGATRRICTALAIGPGTVSVLLLAVVGRRDIADQLCAHIPHGMVENPWAVATTPQRVLDYIFGRVESHADYHDWVCEHVTPWFNLDWITSAKLVAVVGFRALFGAFLLGLLFFVATTSMIRYVSAVPVRTFFAELRGNLALPVLASALLVPLFITAVDWTRWWVMITLDVAIVYILYAIDRPEIEQPPSRRNVQVFVCVVLVLAVIPTGSANNIGR</sequence>
<protein>
    <recommendedName>
        <fullName>Uncharacterized protein Mb1527</fullName>
    </recommendedName>
</protein>
<feature type="chain" id="PRO_0000103857" description="Uncharacterized protein Mb1527">
    <location>
        <begin position="1"/>
        <end position="435"/>
    </location>
</feature>
<feature type="transmembrane region" description="Helical" evidence="1">
    <location>
        <begin position="40"/>
        <end position="60"/>
    </location>
</feature>
<feature type="transmembrane region" description="Helical" evidence="1">
    <location>
        <begin position="103"/>
        <end position="123"/>
    </location>
</feature>
<feature type="transmembrane region" description="Helical" evidence="1">
    <location>
        <begin position="133"/>
        <end position="153"/>
    </location>
</feature>
<feature type="transmembrane region" description="Helical" evidence="1">
    <location>
        <begin position="195"/>
        <end position="215"/>
    </location>
</feature>
<feature type="transmembrane region" description="Helical" evidence="1">
    <location>
        <begin position="226"/>
        <end position="246"/>
    </location>
</feature>
<feature type="transmembrane region" description="Helical" evidence="1">
    <location>
        <begin position="313"/>
        <end position="333"/>
    </location>
</feature>
<feature type="transmembrane region" description="Helical" evidence="1">
    <location>
        <begin position="358"/>
        <end position="378"/>
    </location>
</feature>
<feature type="transmembrane region" description="Helical" evidence="1">
    <location>
        <begin position="381"/>
        <end position="401"/>
    </location>
</feature>
<feature type="transmembrane region" description="Helical" evidence="1">
    <location>
        <begin position="414"/>
        <end position="434"/>
    </location>
</feature>
<evidence type="ECO:0000255" key="1"/>
<evidence type="ECO:0000305" key="2"/>
<reference key="1">
    <citation type="journal article" date="2003" name="Proc. Natl. Acad. Sci. U.S.A.">
        <title>The complete genome sequence of Mycobacterium bovis.</title>
        <authorList>
            <person name="Garnier T."/>
            <person name="Eiglmeier K."/>
            <person name="Camus J.-C."/>
            <person name="Medina N."/>
            <person name="Mansoor H."/>
            <person name="Pryor M."/>
            <person name="Duthoy S."/>
            <person name="Grondin S."/>
            <person name="Lacroix C."/>
            <person name="Monsempe C."/>
            <person name="Simon S."/>
            <person name="Harris B."/>
            <person name="Atkin R."/>
            <person name="Doggett J."/>
            <person name="Mayes R."/>
            <person name="Keating L."/>
            <person name="Wheeler P.R."/>
            <person name="Parkhill J."/>
            <person name="Barrell B.G."/>
            <person name="Cole S.T."/>
            <person name="Gordon S.V."/>
            <person name="Hewinson R.G."/>
        </authorList>
    </citation>
    <scope>NUCLEOTIDE SEQUENCE [LARGE SCALE GENOMIC DNA]</scope>
    <source>
        <strain>ATCC BAA-935 / AF2122/97</strain>
    </source>
</reference>
<reference key="2">
    <citation type="journal article" date="2017" name="Genome Announc.">
        <title>Updated reference genome sequence and annotation of Mycobacterium bovis AF2122/97.</title>
        <authorList>
            <person name="Malone K.M."/>
            <person name="Farrell D."/>
            <person name="Stuber T.P."/>
            <person name="Schubert O.T."/>
            <person name="Aebersold R."/>
            <person name="Robbe-Austerman S."/>
            <person name="Gordon S.V."/>
        </authorList>
    </citation>
    <scope>NUCLEOTIDE SEQUENCE [LARGE SCALE GENOMIC DNA]</scope>
    <scope>GENOME REANNOTATION</scope>
    <source>
        <strain>ATCC BAA-935 / AF2122/97</strain>
    </source>
</reference>
<keyword id="KW-1003">Cell membrane</keyword>
<keyword id="KW-0472">Membrane</keyword>
<keyword id="KW-1185">Reference proteome</keyword>
<keyword id="KW-0812">Transmembrane</keyword>
<keyword id="KW-1133">Transmembrane helix</keyword>
<accession>P64858</accession>
<accession>A0A1R3XYI4</accession>
<accession>P71771</accession>
<accession>X2BIJ5</accession>
<dbReference type="EMBL" id="LT708304">
    <property type="protein sequence ID" value="SIU00130.1"/>
    <property type="molecule type" value="Genomic_DNA"/>
</dbReference>
<dbReference type="RefSeq" id="NP_855179.1">
    <property type="nucleotide sequence ID" value="NC_002945.3"/>
</dbReference>
<dbReference type="RefSeq" id="WP_003898896.1">
    <property type="nucleotide sequence ID" value="NC_002945.4"/>
</dbReference>
<dbReference type="KEGG" id="mbo:BQ2027_MB1527"/>
<dbReference type="PATRIC" id="fig|233413.5.peg.1668"/>
<dbReference type="Proteomes" id="UP000001419">
    <property type="component" value="Chromosome"/>
</dbReference>
<dbReference type="GO" id="GO:0005886">
    <property type="term" value="C:plasma membrane"/>
    <property type="evidence" value="ECO:0007669"/>
    <property type="project" value="UniProtKB-SubCell"/>
</dbReference>
<name>Y1527_MYCBO</name>
<organism>
    <name type="scientific">Mycobacterium bovis (strain ATCC BAA-935 / AF2122/97)</name>
    <dbReference type="NCBI Taxonomy" id="233413"/>
    <lineage>
        <taxon>Bacteria</taxon>
        <taxon>Bacillati</taxon>
        <taxon>Actinomycetota</taxon>
        <taxon>Actinomycetes</taxon>
        <taxon>Mycobacteriales</taxon>
        <taxon>Mycobacteriaceae</taxon>
        <taxon>Mycobacterium</taxon>
        <taxon>Mycobacterium tuberculosis complex</taxon>
    </lineage>
</organism>
<comment type="subcellular location">
    <subcellularLocation>
        <location evidence="2">Cell membrane</location>
        <topology evidence="2">Multi-pass membrane protein</topology>
    </subcellularLocation>
</comment>
<gene>
    <name type="ordered locus">BQ2027_MB1527</name>
</gene>
<proteinExistence type="predicted"/>